<evidence type="ECO:0000250" key="1"/>
<evidence type="ECO:0000255" key="2">
    <source>
        <dbReference type="PROSITE-ProRule" id="PRU10035"/>
    </source>
</evidence>
<evidence type="ECO:0000255" key="3">
    <source>
        <dbReference type="PROSITE-ProRule" id="PRU10036"/>
    </source>
</evidence>
<evidence type="ECO:0000305" key="4"/>
<protein>
    <recommendedName>
        <fullName>Acidic phospholipase A2 CM-II</fullName>
        <shortName>svPLA2</shortName>
        <ecNumber>3.1.1.4</ecNumber>
    </recommendedName>
    <alternativeName>
        <fullName>Phosphatidylcholine 2-acylhydrolase</fullName>
    </alternativeName>
</protein>
<proteinExistence type="evidence at protein level"/>
<reference key="1">
    <citation type="journal article" date="1983" name="Hoppe-Seyler's Z. Physiol. Chem.">
        <title>Snake Venoms. Purification, some properties of two phospholipases A2 (CM-I and CM-II) and the amino-acid sequence of CM-II and Bitis nasicornis (horned adder) venom.</title>
        <authorList>
            <person name="Joubert F.J."/>
            <person name="Townshend G.S."/>
            <person name="Botes D.P."/>
        </authorList>
    </citation>
    <scope>PROTEIN SEQUENCE</scope>
    <source>
        <tissue>Venom</tissue>
    </source>
</reference>
<dbReference type="EC" id="3.1.1.4"/>
<dbReference type="PIR" id="A00761">
    <property type="entry name" value="PSBG2H"/>
</dbReference>
<dbReference type="SMR" id="P00621"/>
<dbReference type="GO" id="GO:0005576">
    <property type="term" value="C:extracellular region"/>
    <property type="evidence" value="ECO:0007669"/>
    <property type="project" value="UniProtKB-SubCell"/>
</dbReference>
<dbReference type="GO" id="GO:0005509">
    <property type="term" value="F:calcium ion binding"/>
    <property type="evidence" value="ECO:0007669"/>
    <property type="project" value="InterPro"/>
</dbReference>
<dbReference type="GO" id="GO:0047498">
    <property type="term" value="F:calcium-dependent phospholipase A2 activity"/>
    <property type="evidence" value="ECO:0007669"/>
    <property type="project" value="TreeGrafter"/>
</dbReference>
<dbReference type="GO" id="GO:0005543">
    <property type="term" value="F:phospholipid binding"/>
    <property type="evidence" value="ECO:0007669"/>
    <property type="project" value="TreeGrafter"/>
</dbReference>
<dbReference type="GO" id="GO:0050482">
    <property type="term" value="P:arachidonate secretion"/>
    <property type="evidence" value="ECO:0007669"/>
    <property type="project" value="InterPro"/>
</dbReference>
<dbReference type="GO" id="GO:0016042">
    <property type="term" value="P:lipid catabolic process"/>
    <property type="evidence" value="ECO:0007669"/>
    <property type="project" value="UniProtKB-KW"/>
</dbReference>
<dbReference type="GO" id="GO:0042130">
    <property type="term" value="P:negative regulation of T cell proliferation"/>
    <property type="evidence" value="ECO:0007669"/>
    <property type="project" value="TreeGrafter"/>
</dbReference>
<dbReference type="GO" id="GO:0006644">
    <property type="term" value="P:phospholipid metabolic process"/>
    <property type="evidence" value="ECO:0007669"/>
    <property type="project" value="InterPro"/>
</dbReference>
<dbReference type="CDD" id="cd00125">
    <property type="entry name" value="PLA2c"/>
    <property type="match status" value="1"/>
</dbReference>
<dbReference type="FunFam" id="1.20.90.10:FF:000001">
    <property type="entry name" value="Basic phospholipase A2 homolog"/>
    <property type="match status" value="1"/>
</dbReference>
<dbReference type="Gene3D" id="1.20.90.10">
    <property type="entry name" value="Phospholipase A2 domain"/>
    <property type="match status" value="1"/>
</dbReference>
<dbReference type="InterPro" id="IPR001211">
    <property type="entry name" value="PLipase_A2"/>
</dbReference>
<dbReference type="InterPro" id="IPR033112">
    <property type="entry name" value="PLipase_A2_Asp_AS"/>
</dbReference>
<dbReference type="InterPro" id="IPR016090">
    <property type="entry name" value="PLipase_A2_dom"/>
</dbReference>
<dbReference type="InterPro" id="IPR036444">
    <property type="entry name" value="PLipase_A2_dom_sf"/>
</dbReference>
<dbReference type="InterPro" id="IPR033113">
    <property type="entry name" value="PLipase_A2_His_AS"/>
</dbReference>
<dbReference type="PANTHER" id="PTHR11716">
    <property type="entry name" value="PHOSPHOLIPASE A2 FAMILY MEMBER"/>
    <property type="match status" value="1"/>
</dbReference>
<dbReference type="PANTHER" id="PTHR11716:SF9">
    <property type="entry name" value="PHOSPHOLIPASE A2, MEMBRANE ASSOCIATED"/>
    <property type="match status" value="1"/>
</dbReference>
<dbReference type="Pfam" id="PF00068">
    <property type="entry name" value="Phospholip_A2_1"/>
    <property type="match status" value="1"/>
</dbReference>
<dbReference type="PRINTS" id="PR00389">
    <property type="entry name" value="PHPHLIPASEA2"/>
</dbReference>
<dbReference type="SMART" id="SM00085">
    <property type="entry name" value="PA2c"/>
    <property type="match status" value="1"/>
</dbReference>
<dbReference type="SUPFAM" id="SSF48619">
    <property type="entry name" value="Phospholipase A2, PLA2"/>
    <property type="match status" value="1"/>
</dbReference>
<dbReference type="PROSITE" id="PS00119">
    <property type="entry name" value="PA2_ASP"/>
    <property type="match status" value="1"/>
</dbReference>
<dbReference type="PROSITE" id="PS00118">
    <property type="entry name" value="PA2_HIS"/>
    <property type="match status" value="1"/>
</dbReference>
<sequence>DLTQFGNMINKMGQSVFDYIYYGCYCGWGGQGKPRDATDRCCFVHDCCYGKMGTYDTKWTSYKYEFQDGDIICGDKDPQKKELCECDRVAAICFANSRNTYNSKYFGYSSSKCTETEQC</sequence>
<accession>P00621</accession>
<keyword id="KW-0106">Calcium</keyword>
<keyword id="KW-0903">Direct protein sequencing</keyword>
<keyword id="KW-1015">Disulfide bond</keyword>
<keyword id="KW-0378">Hydrolase</keyword>
<keyword id="KW-0442">Lipid degradation</keyword>
<keyword id="KW-0443">Lipid metabolism</keyword>
<keyword id="KW-0479">Metal-binding</keyword>
<keyword id="KW-0964">Secreted</keyword>
<feature type="chain" id="PRO_0000161616" description="Acidic phospholipase A2 CM-II">
    <location>
        <begin position="1"/>
        <end position="119"/>
    </location>
</feature>
<feature type="active site" evidence="1">
    <location>
        <position position="45"/>
    </location>
</feature>
<feature type="active site" evidence="1">
    <location>
        <position position="87"/>
    </location>
</feature>
<feature type="binding site" evidence="1">
    <location>
        <position position="25"/>
    </location>
    <ligand>
        <name>Ca(2+)</name>
        <dbReference type="ChEBI" id="CHEBI:29108"/>
    </ligand>
</feature>
<feature type="binding site" evidence="1">
    <location>
        <position position="27"/>
    </location>
    <ligand>
        <name>Ca(2+)</name>
        <dbReference type="ChEBI" id="CHEBI:29108"/>
    </ligand>
</feature>
<feature type="binding site" evidence="1">
    <location>
        <position position="29"/>
    </location>
    <ligand>
        <name>Ca(2+)</name>
        <dbReference type="ChEBI" id="CHEBI:29108"/>
    </ligand>
</feature>
<feature type="binding site" evidence="1">
    <location>
        <position position="46"/>
    </location>
    <ligand>
        <name>Ca(2+)</name>
        <dbReference type="ChEBI" id="CHEBI:29108"/>
    </ligand>
</feature>
<organism>
    <name type="scientific">Bitis nasicornis</name>
    <name type="common">Rhinoceros adder</name>
    <name type="synonym">Rhinoceros viper</name>
    <dbReference type="NCBI Taxonomy" id="8695"/>
    <lineage>
        <taxon>Eukaryota</taxon>
        <taxon>Metazoa</taxon>
        <taxon>Chordata</taxon>
        <taxon>Craniata</taxon>
        <taxon>Vertebrata</taxon>
        <taxon>Euteleostomi</taxon>
        <taxon>Lepidosauria</taxon>
        <taxon>Squamata</taxon>
        <taxon>Bifurcata</taxon>
        <taxon>Unidentata</taxon>
        <taxon>Episquamata</taxon>
        <taxon>Toxicofera</taxon>
        <taxon>Serpentes</taxon>
        <taxon>Colubroidea</taxon>
        <taxon>Viperidae</taxon>
        <taxon>Viperinae</taxon>
        <taxon>Bitis</taxon>
    </lineage>
</organism>
<comment type="function">
    <text>PLA2 catalyzes the calcium-dependent hydrolysis of the 2-acyl groups in 3-sn-phosphoglycerides.</text>
</comment>
<comment type="catalytic activity">
    <reaction evidence="2 3">
        <text>a 1,2-diacyl-sn-glycero-3-phosphocholine + H2O = a 1-acyl-sn-glycero-3-phosphocholine + a fatty acid + H(+)</text>
        <dbReference type="Rhea" id="RHEA:15801"/>
        <dbReference type="ChEBI" id="CHEBI:15377"/>
        <dbReference type="ChEBI" id="CHEBI:15378"/>
        <dbReference type="ChEBI" id="CHEBI:28868"/>
        <dbReference type="ChEBI" id="CHEBI:57643"/>
        <dbReference type="ChEBI" id="CHEBI:58168"/>
        <dbReference type="EC" id="3.1.1.4"/>
    </reaction>
</comment>
<comment type="cofactor">
    <cofactor evidence="1">
        <name>Ca(2+)</name>
        <dbReference type="ChEBI" id="CHEBI:29108"/>
    </cofactor>
    <text evidence="1">Binds 1 Ca(2+) ion.</text>
</comment>
<comment type="subcellular location">
    <subcellularLocation>
        <location>Secreted</location>
    </subcellularLocation>
</comment>
<comment type="tissue specificity">
    <text>Expressed by the venom gland.</text>
</comment>
<comment type="PTM">
    <text>Contains 6 disulfide bonds.</text>
</comment>
<comment type="miscellaneous">
    <text>Two very similar relatively non-toxic phospholipases were isolated from the venom, CM-II (shown here) and CM-I. The amino acid composition of CM-I differed from that of CM-II in having 1 more Thr and Ala and one fewer Ser and Lys.</text>
</comment>
<comment type="similarity">
    <text evidence="4">Belongs to the phospholipase A2 family. Group II subfamily. D49 sub-subfamily.</text>
</comment>
<name>PA2A2_BITNA</name>